<protein>
    <recommendedName>
        <fullName evidence="1">Small ribosomal subunit protein uS9</fullName>
    </recommendedName>
    <alternativeName>
        <fullName evidence="3">30S ribosomal protein S9</fullName>
    </alternativeName>
</protein>
<proteinExistence type="inferred from homology"/>
<gene>
    <name evidence="1" type="primary">rpsI</name>
    <name type="ordered locus">Cthe_1782</name>
</gene>
<comment type="similarity">
    <text evidence="1">Belongs to the universal ribosomal protein uS9 family.</text>
</comment>
<feature type="chain" id="PRO_1000051211" description="Small ribosomal subunit protein uS9">
    <location>
        <begin position="1"/>
        <end position="130"/>
    </location>
</feature>
<feature type="region of interest" description="Disordered" evidence="2">
    <location>
        <begin position="105"/>
        <end position="130"/>
    </location>
</feature>
<feature type="compositionally biased region" description="Basic residues" evidence="2">
    <location>
        <begin position="111"/>
        <end position="130"/>
    </location>
</feature>
<reference key="1">
    <citation type="submission" date="2007-02" db="EMBL/GenBank/DDBJ databases">
        <title>Complete sequence of Clostridium thermocellum ATCC 27405.</title>
        <authorList>
            <consortium name="US DOE Joint Genome Institute"/>
            <person name="Copeland A."/>
            <person name="Lucas S."/>
            <person name="Lapidus A."/>
            <person name="Barry K."/>
            <person name="Detter J.C."/>
            <person name="Glavina del Rio T."/>
            <person name="Hammon N."/>
            <person name="Israni S."/>
            <person name="Dalin E."/>
            <person name="Tice H."/>
            <person name="Pitluck S."/>
            <person name="Chertkov O."/>
            <person name="Brettin T."/>
            <person name="Bruce D."/>
            <person name="Han C."/>
            <person name="Tapia R."/>
            <person name="Gilna P."/>
            <person name="Schmutz J."/>
            <person name="Larimer F."/>
            <person name="Land M."/>
            <person name="Hauser L."/>
            <person name="Kyrpides N."/>
            <person name="Mikhailova N."/>
            <person name="Wu J.H.D."/>
            <person name="Newcomb M."/>
            <person name="Richardson P."/>
        </authorList>
    </citation>
    <scope>NUCLEOTIDE SEQUENCE [LARGE SCALE GENOMIC DNA]</scope>
    <source>
        <strain>ATCC 27405 / DSM 1237 / JCM 9322 / NBRC 103400 / NCIMB 10682 / NRRL B-4536 / VPI 7372</strain>
    </source>
</reference>
<organism>
    <name type="scientific">Acetivibrio thermocellus (strain ATCC 27405 / DSM 1237 / JCM 9322 / NBRC 103400 / NCIMB 10682 / NRRL B-4536 / VPI 7372)</name>
    <name type="common">Clostridium thermocellum</name>
    <dbReference type="NCBI Taxonomy" id="203119"/>
    <lineage>
        <taxon>Bacteria</taxon>
        <taxon>Bacillati</taxon>
        <taxon>Bacillota</taxon>
        <taxon>Clostridia</taxon>
        <taxon>Eubacteriales</taxon>
        <taxon>Oscillospiraceae</taxon>
        <taxon>Acetivibrio</taxon>
    </lineage>
</organism>
<accession>A3DGC4</accession>
<sequence length="130" mass="14665">MAKVQYYGTGRRKKSVARVRLVPGDGKIIINERELDDYFGLETLKTIVKQPLVLTDTLGKFDVLCKVAGGGYTGQAGAIRHGISRALLKFDEELRPALKKAGFLTRDPRMKERKKYGLKKARRAPQFSKR</sequence>
<name>RS9_ACET2</name>
<evidence type="ECO:0000255" key="1">
    <source>
        <dbReference type="HAMAP-Rule" id="MF_00532"/>
    </source>
</evidence>
<evidence type="ECO:0000256" key="2">
    <source>
        <dbReference type="SAM" id="MobiDB-lite"/>
    </source>
</evidence>
<evidence type="ECO:0000305" key="3"/>
<keyword id="KW-1185">Reference proteome</keyword>
<keyword id="KW-0687">Ribonucleoprotein</keyword>
<keyword id="KW-0689">Ribosomal protein</keyword>
<dbReference type="EMBL" id="CP000568">
    <property type="protein sequence ID" value="ABN53003.1"/>
    <property type="molecule type" value="Genomic_DNA"/>
</dbReference>
<dbReference type="RefSeq" id="WP_003515879.1">
    <property type="nucleotide sequence ID" value="NC_009012.1"/>
</dbReference>
<dbReference type="SMR" id="A3DGC4"/>
<dbReference type="STRING" id="203119.Cthe_1782"/>
<dbReference type="GeneID" id="35804800"/>
<dbReference type="KEGG" id="cth:Cthe_1782"/>
<dbReference type="eggNOG" id="COG0103">
    <property type="taxonomic scope" value="Bacteria"/>
</dbReference>
<dbReference type="HOGENOM" id="CLU_046483_2_1_9"/>
<dbReference type="OrthoDB" id="9803965at2"/>
<dbReference type="Proteomes" id="UP000002145">
    <property type="component" value="Chromosome"/>
</dbReference>
<dbReference type="GO" id="GO:0022627">
    <property type="term" value="C:cytosolic small ribosomal subunit"/>
    <property type="evidence" value="ECO:0007669"/>
    <property type="project" value="TreeGrafter"/>
</dbReference>
<dbReference type="GO" id="GO:0003723">
    <property type="term" value="F:RNA binding"/>
    <property type="evidence" value="ECO:0007669"/>
    <property type="project" value="TreeGrafter"/>
</dbReference>
<dbReference type="GO" id="GO:0003735">
    <property type="term" value="F:structural constituent of ribosome"/>
    <property type="evidence" value="ECO:0007669"/>
    <property type="project" value="InterPro"/>
</dbReference>
<dbReference type="GO" id="GO:0006412">
    <property type="term" value="P:translation"/>
    <property type="evidence" value="ECO:0007669"/>
    <property type="project" value="UniProtKB-UniRule"/>
</dbReference>
<dbReference type="FunFam" id="3.30.230.10:FF:000001">
    <property type="entry name" value="30S ribosomal protein S9"/>
    <property type="match status" value="1"/>
</dbReference>
<dbReference type="Gene3D" id="3.30.230.10">
    <property type="match status" value="1"/>
</dbReference>
<dbReference type="HAMAP" id="MF_00532_B">
    <property type="entry name" value="Ribosomal_uS9_B"/>
    <property type="match status" value="1"/>
</dbReference>
<dbReference type="InterPro" id="IPR020568">
    <property type="entry name" value="Ribosomal_Su5_D2-typ_SF"/>
</dbReference>
<dbReference type="InterPro" id="IPR000754">
    <property type="entry name" value="Ribosomal_uS9"/>
</dbReference>
<dbReference type="InterPro" id="IPR023035">
    <property type="entry name" value="Ribosomal_uS9_bac/plastid"/>
</dbReference>
<dbReference type="InterPro" id="IPR020574">
    <property type="entry name" value="Ribosomal_uS9_CS"/>
</dbReference>
<dbReference type="InterPro" id="IPR014721">
    <property type="entry name" value="Ribsml_uS5_D2-typ_fold_subgr"/>
</dbReference>
<dbReference type="NCBIfam" id="NF001099">
    <property type="entry name" value="PRK00132.1"/>
    <property type="match status" value="1"/>
</dbReference>
<dbReference type="PANTHER" id="PTHR21569">
    <property type="entry name" value="RIBOSOMAL PROTEIN S9"/>
    <property type="match status" value="1"/>
</dbReference>
<dbReference type="PANTHER" id="PTHR21569:SF1">
    <property type="entry name" value="SMALL RIBOSOMAL SUBUNIT PROTEIN US9M"/>
    <property type="match status" value="1"/>
</dbReference>
<dbReference type="Pfam" id="PF00380">
    <property type="entry name" value="Ribosomal_S9"/>
    <property type="match status" value="1"/>
</dbReference>
<dbReference type="SUPFAM" id="SSF54211">
    <property type="entry name" value="Ribosomal protein S5 domain 2-like"/>
    <property type="match status" value="1"/>
</dbReference>
<dbReference type="PROSITE" id="PS00360">
    <property type="entry name" value="RIBOSOMAL_S9"/>
    <property type="match status" value="1"/>
</dbReference>